<dbReference type="EMBL" id="U00096">
    <property type="protein sequence ID" value="AAC75162.1"/>
    <property type="molecule type" value="Genomic_DNA"/>
</dbReference>
<dbReference type="EMBL" id="AP009048">
    <property type="protein sequence ID" value="BAA15969.1"/>
    <property type="molecule type" value="Genomic_DNA"/>
</dbReference>
<dbReference type="PIR" id="D64977">
    <property type="entry name" value="D64977"/>
</dbReference>
<dbReference type="RefSeq" id="NP_416604.1">
    <property type="nucleotide sequence ID" value="NC_000913.3"/>
</dbReference>
<dbReference type="RefSeq" id="WP_000434038.1">
    <property type="nucleotide sequence ID" value="NZ_STEB01000002.1"/>
</dbReference>
<dbReference type="SMR" id="P0ACM5"/>
<dbReference type="BioGRID" id="4261161">
    <property type="interactions" value="128"/>
</dbReference>
<dbReference type="DIP" id="DIP-11893N"/>
<dbReference type="FunCoup" id="P0ACM5">
    <property type="interactions" value="26"/>
</dbReference>
<dbReference type="IntAct" id="P0ACM5">
    <property type="interactions" value="2"/>
</dbReference>
<dbReference type="STRING" id="511145.b2101"/>
<dbReference type="jPOST" id="P0ACM5"/>
<dbReference type="PaxDb" id="511145-b2101"/>
<dbReference type="EnsemblBacteria" id="AAC75162">
    <property type="protein sequence ID" value="AAC75162"/>
    <property type="gene ID" value="b2101"/>
</dbReference>
<dbReference type="GeneID" id="946639"/>
<dbReference type="KEGG" id="ecj:JW2088"/>
<dbReference type="KEGG" id="eco:b2101"/>
<dbReference type="KEGG" id="ecoc:C3026_11790"/>
<dbReference type="PATRIC" id="fig|1411691.4.peg.146"/>
<dbReference type="EchoBASE" id="EB3819"/>
<dbReference type="eggNOG" id="COG2188">
    <property type="taxonomic scope" value="Bacteria"/>
</dbReference>
<dbReference type="HOGENOM" id="CLU_063236_4_0_6"/>
<dbReference type="InParanoid" id="P0ACM5"/>
<dbReference type="OMA" id="QTGVALW"/>
<dbReference type="OrthoDB" id="6626198at2"/>
<dbReference type="PhylomeDB" id="P0ACM5"/>
<dbReference type="BioCyc" id="EcoCyc:G7133-MONOMER"/>
<dbReference type="PRO" id="PR:P0ACM5"/>
<dbReference type="Proteomes" id="UP000000625">
    <property type="component" value="Chromosome"/>
</dbReference>
<dbReference type="GO" id="GO:0003677">
    <property type="term" value="F:DNA binding"/>
    <property type="evidence" value="ECO:0007669"/>
    <property type="project" value="UniProtKB-KW"/>
</dbReference>
<dbReference type="GO" id="GO:0003700">
    <property type="term" value="F:DNA-binding transcription factor activity"/>
    <property type="evidence" value="ECO:0007669"/>
    <property type="project" value="InterPro"/>
</dbReference>
<dbReference type="GO" id="GO:0045892">
    <property type="term" value="P:negative regulation of DNA-templated transcription"/>
    <property type="evidence" value="ECO:0000318"/>
    <property type="project" value="GO_Central"/>
</dbReference>
<dbReference type="CDD" id="cd07377">
    <property type="entry name" value="WHTH_GntR"/>
    <property type="match status" value="1"/>
</dbReference>
<dbReference type="Gene3D" id="3.40.1410.10">
    <property type="entry name" value="Chorismate lyase-like"/>
    <property type="match status" value="1"/>
</dbReference>
<dbReference type="Gene3D" id="1.10.10.10">
    <property type="entry name" value="Winged helix-like DNA-binding domain superfamily/Winged helix DNA-binding domain"/>
    <property type="match status" value="1"/>
</dbReference>
<dbReference type="InterPro" id="IPR050679">
    <property type="entry name" value="Bact_HTH_transcr_reg"/>
</dbReference>
<dbReference type="InterPro" id="IPR028978">
    <property type="entry name" value="Chorismate_lyase_/UTRA_dom_sf"/>
</dbReference>
<dbReference type="InterPro" id="IPR000524">
    <property type="entry name" value="Tscrpt_reg_HTH_GntR"/>
</dbReference>
<dbReference type="InterPro" id="IPR011663">
    <property type="entry name" value="UTRA"/>
</dbReference>
<dbReference type="InterPro" id="IPR036388">
    <property type="entry name" value="WH-like_DNA-bd_sf"/>
</dbReference>
<dbReference type="InterPro" id="IPR036390">
    <property type="entry name" value="WH_DNA-bd_sf"/>
</dbReference>
<dbReference type="PANTHER" id="PTHR44846">
    <property type="entry name" value="MANNOSYL-D-GLYCERATE TRANSPORT/METABOLISM SYSTEM REPRESSOR MNGR-RELATED"/>
    <property type="match status" value="1"/>
</dbReference>
<dbReference type="PANTHER" id="PTHR44846:SF1">
    <property type="entry name" value="MANNOSYL-D-GLYCERATE TRANSPORT_METABOLISM SYSTEM REPRESSOR MNGR-RELATED"/>
    <property type="match status" value="1"/>
</dbReference>
<dbReference type="Pfam" id="PF00392">
    <property type="entry name" value="GntR"/>
    <property type="match status" value="1"/>
</dbReference>
<dbReference type="Pfam" id="PF07702">
    <property type="entry name" value="UTRA"/>
    <property type="match status" value="1"/>
</dbReference>
<dbReference type="PRINTS" id="PR00035">
    <property type="entry name" value="HTHGNTR"/>
</dbReference>
<dbReference type="SMART" id="SM00345">
    <property type="entry name" value="HTH_GNTR"/>
    <property type="match status" value="1"/>
</dbReference>
<dbReference type="SMART" id="SM00866">
    <property type="entry name" value="UTRA"/>
    <property type="match status" value="1"/>
</dbReference>
<dbReference type="SUPFAM" id="SSF64288">
    <property type="entry name" value="Chorismate lyase-like"/>
    <property type="match status" value="1"/>
</dbReference>
<dbReference type="SUPFAM" id="SSF46785">
    <property type="entry name" value="Winged helix' DNA-binding domain"/>
    <property type="match status" value="1"/>
</dbReference>
<dbReference type="PROSITE" id="PS50949">
    <property type="entry name" value="HTH_GNTR"/>
    <property type="match status" value="1"/>
</dbReference>
<protein>
    <recommendedName>
        <fullName evidence="5">HTH-type transcriptional regulator GgaR</fullName>
    </recommendedName>
    <alternativeName>
        <fullName evidence="4">Repressor of glycogen accumulation</fullName>
    </alternativeName>
    <alternativeName>
        <fullName evidence="4">Transcription factor GgaR</fullName>
    </alternativeName>
</protein>
<proteinExistence type="evidence at protein level"/>
<evidence type="ECO:0000255" key="1">
    <source>
        <dbReference type="PROSITE-ProRule" id="PRU00307"/>
    </source>
</evidence>
<evidence type="ECO:0000269" key="2">
    <source>
    </source>
</evidence>
<evidence type="ECO:0000269" key="3">
    <source>
    </source>
</evidence>
<evidence type="ECO:0000303" key="4">
    <source>
    </source>
</evidence>
<evidence type="ECO:0000305" key="5"/>
<accession>P0ACM5</accession>
<accession>O08014</accession>
<accession>P76420</accession>
<name>GGAR_ECOLI</name>
<organism>
    <name type="scientific">Escherichia coli (strain K12)</name>
    <dbReference type="NCBI Taxonomy" id="83333"/>
    <lineage>
        <taxon>Bacteria</taxon>
        <taxon>Pseudomonadati</taxon>
        <taxon>Pseudomonadota</taxon>
        <taxon>Gammaproteobacteria</taxon>
        <taxon>Enterobacterales</taxon>
        <taxon>Enterobacteriaceae</taxon>
        <taxon>Escherichia</taxon>
    </lineage>
</organism>
<keyword id="KW-0238">DNA-binding</keyword>
<keyword id="KW-1185">Reference proteome</keyword>
<keyword id="KW-0678">Repressor</keyword>
<keyword id="KW-0804">Transcription</keyword>
<keyword id="KW-0805">Transcription regulation</keyword>
<gene>
    <name evidence="4" type="primary">ggaR</name>
    <name type="synonym">yegW</name>
    <name type="ordered locus">b2101</name>
    <name type="ordered locus">JW2088</name>
</gene>
<comment type="function">
    <text evidence="3">Transcriptional regulator that regulates glycogen accumulation in response to the amount of glucose available to the cell (PubMed:38257942). Acts as a repressor of the yegTUV operon, which may be involved in glycogen accumulation (PubMed:38257942). Binds at two adjacent sites within the yegTUV upstream region (PubMed:38257942).</text>
</comment>
<comment type="activity regulation">
    <text evidence="3">Senses ADP-glucose (ADPG), which is the substrate for glycogen elongation, as an effector (PubMed:38257942). In the presence of ADPG, GgaR becomes inactive and derepresses the yegTUV operon, leading to glycogen accumulation (PubMed:38257942). In contrast, in the absence of glucose, the concentration of ADPG decreases, GgaR becomes active, and glycogen accumulation is repressed (PubMed:38257942).</text>
</comment>
<comment type="induction">
    <text evidence="2 3">Protein expression level is constant in growth phase (PubMed:38257942). Expression is affected by cold stress and glucose to lactose shift (PubMed:35880217).</text>
</comment>
<comment type="disruption phenotype">
    <text evidence="3">In rich medium, deletion of the gene results in an inability to repress the yegTUV operon and promote glycogen accumulation, but no effect on growth is observed (PubMed:38257942). In minimal glucose medium, the deletion mutant promotes glycogen accumulation, at the expense of poor cell proliferation (PubMed:38257942). The mutant shows increased biofilm formation (PubMed:38257942).</text>
</comment>
<feature type="chain" id="PRO_0000050676" description="HTH-type transcriptional regulator GgaR">
    <location>
        <begin position="1"/>
        <end position="248"/>
    </location>
</feature>
<feature type="domain" description="HTH gntR-type" evidence="1">
    <location>
        <begin position="22"/>
        <end position="90"/>
    </location>
</feature>
<feature type="DNA-binding region" description="H-T-H motif" evidence="1">
    <location>
        <begin position="50"/>
        <end position="69"/>
    </location>
</feature>
<reference key="1">
    <citation type="journal article" date="1996" name="DNA Res.">
        <title>A 460-kb DNA sequence of the Escherichia coli K-12 genome corresponding to the 40.1-50.0 min region on the linkage map.</title>
        <authorList>
            <person name="Itoh T."/>
            <person name="Aiba H."/>
            <person name="Baba T."/>
            <person name="Fujita K."/>
            <person name="Hayashi K."/>
            <person name="Inada T."/>
            <person name="Isono K."/>
            <person name="Kasai H."/>
            <person name="Kimura S."/>
            <person name="Kitakawa M."/>
            <person name="Kitagawa M."/>
            <person name="Makino K."/>
            <person name="Miki T."/>
            <person name="Mizobuchi K."/>
            <person name="Mori H."/>
            <person name="Mori T."/>
            <person name="Motomura K."/>
            <person name="Nakade S."/>
            <person name="Nakamura Y."/>
            <person name="Nashimoto H."/>
            <person name="Nishio Y."/>
            <person name="Oshima T."/>
            <person name="Saito N."/>
            <person name="Sampei G."/>
            <person name="Seki Y."/>
            <person name="Sivasundaram S."/>
            <person name="Tagami H."/>
            <person name="Takeda J."/>
            <person name="Takemoto K."/>
            <person name="Wada C."/>
            <person name="Yamamoto Y."/>
            <person name="Horiuchi T."/>
        </authorList>
    </citation>
    <scope>NUCLEOTIDE SEQUENCE [LARGE SCALE GENOMIC DNA]</scope>
    <source>
        <strain>K12 / W3110 / ATCC 27325 / DSM 5911</strain>
    </source>
</reference>
<reference key="2">
    <citation type="journal article" date="1997" name="Science">
        <title>The complete genome sequence of Escherichia coli K-12.</title>
        <authorList>
            <person name="Blattner F.R."/>
            <person name="Plunkett G. III"/>
            <person name="Bloch C.A."/>
            <person name="Perna N.T."/>
            <person name="Burland V."/>
            <person name="Riley M."/>
            <person name="Collado-Vides J."/>
            <person name="Glasner J.D."/>
            <person name="Rode C.K."/>
            <person name="Mayhew G.F."/>
            <person name="Gregor J."/>
            <person name="Davis N.W."/>
            <person name="Kirkpatrick H.A."/>
            <person name="Goeden M.A."/>
            <person name="Rose D.J."/>
            <person name="Mau B."/>
            <person name="Shao Y."/>
        </authorList>
    </citation>
    <scope>NUCLEOTIDE SEQUENCE [LARGE SCALE GENOMIC DNA]</scope>
    <source>
        <strain>K12 / MG1655 / ATCC 47076</strain>
    </source>
</reference>
<reference key="3">
    <citation type="journal article" date="2006" name="Mol. Syst. Biol.">
        <title>Highly accurate genome sequences of Escherichia coli K-12 strains MG1655 and W3110.</title>
        <authorList>
            <person name="Hayashi K."/>
            <person name="Morooka N."/>
            <person name="Yamamoto Y."/>
            <person name="Fujita K."/>
            <person name="Isono K."/>
            <person name="Choi S."/>
            <person name="Ohtsubo E."/>
            <person name="Baba T."/>
            <person name="Wanner B.L."/>
            <person name="Mori H."/>
            <person name="Horiuchi T."/>
        </authorList>
    </citation>
    <scope>NUCLEOTIDE SEQUENCE [LARGE SCALE GENOMIC DNA]</scope>
    <source>
        <strain>K12 / W3110 / ATCC 27325 / DSM 5911</strain>
    </source>
</reference>
<reference key="4">
    <citation type="journal article" date="2022" name="PeerJ">
        <title>Escherichia coli transcription factors of unknown function: sequence features and possible evolutionary relationships.</title>
        <authorList>
            <person name="Duarte-Velazquez I."/>
            <person name="de la Mora J."/>
            <person name="Ramirez-Prado J.H."/>
            <person name="Aguillon-Barcenas A."/>
            <person name="Tornero-Gutierrez F."/>
            <person name="Cordero-Loreto E."/>
            <person name="Anaya-Velazquez F."/>
            <person name="Paramo-Perez I."/>
            <person name="Rangel-Serrano A."/>
            <person name="Munoz-Carranza S.R."/>
            <person name="Romero-Gonzalez O.E."/>
            <person name="Cardoso-Reyes L.R."/>
            <person name="Rodriguez-Ojeda R.A."/>
            <person name="Mora-Montes H.M."/>
            <person name="Vargas-Maya N.I."/>
            <person name="Padilla-Vaca F."/>
            <person name="Franco B."/>
        </authorList>
    </citation>
    <scope>INDUCTION</scope>
</reference>
<reference key="5">
    <citation type="journal article" date="2024" name="Microorganisms">
        <title>Regulatory Role of GgaR (YegW) for Glycogen Accumulation in Escherichia coli K-12.</title>
        <authorList>
            <person name="Saito S."/>
            <person name="Kobayashi I."/>
            <person name="Hoshina M."/>
            <person name="Uenaka E."/>
            <person name="Sakurai A."/>
            <person name="Imamura S."/>
            <person name="Shimada T."/>
        </authorList>
    </citation>
    <scope>FUNCTION</scope>
    <scope>DNA-BINDING</scope>
    <scope>ACTIVITY REGULATION</scope>
    <scope>EXPRESSION</scope>
    <scope>DISRUPTION PHENOTYPE</scope>
    <source>
        <strain>K12</strain>
    </source>
</reference>
<sequence length="248" mass="28277">MEQAHTQLIAQLNERILAADNTPLYIKFAETVKNAVRSGVLEHGNILPGERDLSQLTGVSRITVRKAMQALEEEGVVTRSRGYGTQINNIFEYSLKEARGFSQQVVLRGKKPDTLWVNKRVVKCPEEVAQQLAVEAGSDVFLLKRIRYVDEEAVSIEESWVPAHLIHDVDAIGISLYDYFRSQHIYPQRTRSRVSARMPDAEFQSHIQLDSKIPVLVIKQVALDQQQRPIEYSISHCRSDLYVFVCEE</sequence>